<name>ODAM_BOVIN</name>
<gene>
    <name type="primary">ODAM</name>
    <name type="synonym">APIN</name>
</gene>
<evidence type="ECO:0000250" key="1"/>
<evidence type="ECO:0000250" key="2">
    <source>
        <dbReference type="UniProtKB" id="A1E959"/>
    </source>
</evidence>
<evidence type="ECO:0000250" key="3">
    <source>
        <dbReference type="UniProtKB" id="Q3HS83"/>
    </source>
</evidence>
<evidence type="ECO:0000255" key="4"/>
<evidence type="ECO:0000256" key="5">
    <source>
        <dbReference type="SAM" id="MobiDB-lite"/>
    </source>
</evidence>
<evidence type="ECO:0000305" key="6"/>
<keyword id="KW-0091">Biomineralization</keyword>
<keyword id="KW-0963">Cytoplasm</keyword>
<keyword id="KW-0325">Glycoprotein</keyword>
<keyword id="KW-0539">Nucleus</keyword>
<keyword id="KW-1185">Reference proteome</keyword>
<keyword id="KW-0964">Secreted</keyword>
<keyword id="KW-0732">Signal</keyword>
<organism>
    <name type="scientific">Bos taurus</name>
    <name type="common">Bovine</name>
    <dbReference type="NCBI Taxonomy" id="9913"/>
    <lineage>
        <taxon>Eukaryota</taxon>
        <taxon>Metazoa</taxon>
        <taxon>Chordata</taxon>
        <taxon>Craniata</taxon>
        <taxon>Vertebrata</taxon>
        <taxon>Euteleostomi</taxon>
        <taxon>Mammalia</taxon>
        <taxon>Eutheria</taxon>
        <taxon>Laurasiatheria</taxon>
        <taxon>Artiodactyla</taxon>
        <taxon>Ruminantia</taxon>
        <taxon>Pecora</taxon>
        <taxon>Bovidae</taxon>
        <taxon>Bovinae</taxon>
        <taxon>Bos</taxon>
    </lineage>
</organism>
<reference key="1">
    <citation type="submission" date="2006-11" db="EMBL/GenBank/DDBJ databases">
        <authorList>
            <person name="Moffatt P."/>
            <person name="Smith C.E."/>
            <person name="Nanci A."/>
        </authorList>
    </citation>
    <scope>NUCLEOTIDE SEQUENCE [MRNA]</scope>
</reference>
<feature type="signal peptide" evidence="4">
    <location>
        <begin position="1"/>
        <end position="15"/>
    </location>
</feature>
<feature type="chain" id="PRO_5000214105" description="Odontogenic ameloblast-associated protein">
    <location>
        <begin position="16"/>
        <end position="277"/>
    </location>
</feature>
<feature type="region of interest" description="Disordered" evidence="5">
    <location>
        <begin position="103"/>
        <end position="124"/>
    </location>
</feature>
<feature type="region of interest" description="Interaction with ARHGEF5" evidence="2">
    <location>
        <begin position="127"/>
        <end position="129"/>
    </location>
</feature>
<feature type="glycosylation site" description="O-linked (GalNAc...) threonine" evidence="4">
    <location>
        <position position="115"/>
    </location>
</feature>
<feature type="glycosylation site" description="O-linked (GalNAc...) threonine" evidence="4">
    <location>
        <position position="208"/>
    </location>
</feature>
<feature type="glycosylation site" description="O-linked (GalNAc...) threonine" evidence="4">
    <location>
        <position position="248"/>
    </location>
</feature>
<feature type="glycosylation site" description="O-linked (GalNAc...) threonine" evidence="4">
    <location>
        <position position="271"/>
    </location>
</feature>
<comment type="function">
    <text evidence="2">Tooth-associated epithelia protein that probably plays a role in odontogenesis, the complex process that results in the initiation and generation of the tooth. May be incorporated in the enamel matrix at the end of mineralization process. Involved in the induction of RHOA activity via interaction with ARHGEF and expression of downstream factors such as ROCK. Plays a role in attachment of the junctional epithelium to the tooth surface.</text>
</comment>
<comment type="subunit">
    <text evidence="2">Interacts (via C-terminus) with ARHGEF5.</text>
</comment>
<comment type="subcellular location">
    <subcellularLocation>
        <location evidence="3">Secreted</location>
    </subcellularLocation>
    <subcellularLocation>
        <location evidence="2">Cytoplasm</location>
    </subcellularLocation>
    <subcellularLocation>
        <location evidence="2">Nucleus</location>
    </subcellularLocation>
</comment>
<comment type="PTM">
    <text evidence="1">O-glycosylated.</text>
</comment>
<comment type="similarity">
    <text evidence="6">Belongs to the ODAM family.</text>
</comment>
<proteinExistence type="evidence at transcript level"/>
<accession>A1YQ93</accession>
<dbReference type="EMBL" id="EF121760">
    <property type="protein sequence ID" value="ABL63510.1"/>
    <property type="molecule type" value="mRNA"/>
</dbReference>
<dbReference type="RefSeq" id="NP_001073784.1">
    <property type="nucleotide sequence ID" value="NM_001080315.1"/>
</dbReference>
<dbReference type="FunCoup" id="A1YQ93">
    <property type="interactions" value="2"/>
</dbReference>
<dbReference type="STRING" id="9913.ENSBTAP00000039362"/>
<dbReference type="GlyCosmos" id="A1YQ93">
    <property type="glycosylation" value="4 sites, No reported glycans"/>
</dbReference>
<dbReference type="GlyGen" id="A1YQ93">
    <property type="glycosylation" value="4 sites"/>
</dbReference>
<dbReference type="PaxDb" id="9913-ENSBTAP00000039362"/>
<dbReference type="Ensembl" id="ENSBTAT00000039572.5">
    <property type="protein sequence ID" value="ENSBTAP00000039362.5"/>
    <property type="gene ID" value="ENSBTAG00000006810.7"/>
</dbReference>
<dbReference type="GeneID" id="613976"/>
<dbReference type="KEGG" id="bta:613976"/>
<dbReference type="CTD" id="54959"/>
<dbReference type="VEuPathDB" id="HostDB:ENSBTAG00000006810"/>
<dbReference type="VGNC" id="VGNC:50115">
    <property type="gene designation" value="ODAM"/>
</dbReference>
<dbReference type="eggNOG" id="ENOG502RM1P">
    <property type="taxonomic scope" value="Eukaryota"/>
</dbReference>
<dbReference type="GeneTree" id="ENSGT00390000011100"/>
<dbReference type="InParanoid" id="A1YQ93"/>
<dbReference type="OMA" id="PNHVMPY"/>
<dbReference type="OrthoDB" id="9889202at2759"/>
<dbReference type="Proteomes" id="UP000009136">
    <property type="component" value="Chromosome 6"/>
</dbReference>
<dbReference type="Bgee" id="ENSBTAG00000006810">
    <property type="expression patterns" value="Expressed in milk and 4 other cell types or tissues"/>
</dbReference>
<dbReference type="GO" id="GO:0071944">
    <property type="term" value="C:cell periphery"/>
    <property type="evidence" value="ECO:0007669"/>
    <property type="project" value="Ensembl"/>
</dbReference>
<dbReference type="GO" id="GO:0005737">
    <property type="term" value="C:cytoplasm"/>
    <property type="evidence" value="ECO:0000318"/>
    <property type="project" value="GO_Central"/>
</dbReference>
<dbReference type="GO" id="GO:0005829">
    <property type="term" value="C:cytosol"/>
    <property type="evidence" value="ECO:0007669"/>
    <property type="project" value="Ensembl"/>
</dbReference>
<dbReference type="GO" id="GO:0005615">
    <property type="term" value="C:extracellular space"/>
    <property type="evidence" value="ECO:0007669"/>
    <property type="project" value="Ensembl"/>
</dbReference>
<dbReference type="GO" id="GO:0072686">
    <property type="term" value="C:mitotic spindle"/>
    <property type="evidence" value="ECO:0007669"/>
    <property type="project" value="Ensembl"/>
</dbReference>
<dbReference type="GO" id="GO:0005654">
    <property type="term" value="C:nucleoplasm"/>
    <property type="evidence" value="ECO:0007669"/>
    <property type="project" value="Ensembl"/>
</dbReference>
<dbReference type="GO" id="GO:0005634">
    <property type="term" value="C:nucleus"/>
    <property type="evidence" value="ECO:0000318"/>
    <property type="project" value="GO_Central"/>
</dbReference>
<dbReference type="GO" id="GO:0099512">
    <property type="term" value="C:supramolecular fiber"/>
    <property type="evidence" value="ECO:0007669"/>
    <property type="project" value="Ensembl"/>
</dbReference>
<dbReference type="GO" id="GO:0031214">
    <property type="term" value="P:biomineral tissue development"/>
    <property type="evidence" value="ECO:0007669"/>
    <property type="project" value="UniProtKB-KW"/>
</dbReference>
<dbReference type="GO" id="GO:0006954">
    <property type="term" value="P:inflammatory response"/>
    <property type="evidence" value="ECO:0007669"/>
    <property type="project" value="Ensembl"/>
</dbReference>
<dbReference type="GO" id="GO:0042475">
    <property type="term" value="P:odontogenesis of dentin-containing tooth"/>
    <property type="evidence" value="ECO:0000318"/>
    <property type="project" value="GO_Central"/>
</dbReference>
<dbReference type="GO" id="GO:0060054">
    <property type="term" value="P:positive regulation of epithelial cell proliferation involved in wound healing"/>
    <property type="evidence" value="ECO:0007669"/>
    <property type="project" value="Ensembl"/>
</dbReference>
<dbReference type="GO" id="GO:0010628">
    <property type="term" value="P:positive regulation of gene expression"/>
    <property type="evidence" value="ECO:0007669"/>
    <property type="project" value="Ensembl"/>
</dbReference>
<dbReference type="GO" id="GO:0032956">
    <property type="term" value="P:regulation of actin cytoskeleton organization"/>
    <property type="evidence" value="ECO:0007669"/>
    <property type="project" value="Ensembl"/>
</dbReference>
<dbReference type="InterPro" id="IPR026802">
    <property type="entry name" value="Odam"/>
</dbReference>
<dbReference type="PANTHER" id="PTHR16237">
    <property type="entry name" value="ODONTOGENIC AMELOBLAST-ASSOCIATED PROTEIN"/>
    <property type="match status" value="1"/>
</dbReference>
<dbReference type="PANTHER" id="PTHR16237:SF3">
    <property type="entry name" value="ODONTOGENIC AMELOBLAST-ASSOCIATED PROTEIN"/>
    <property type="match status" value="1"/>
</dbReference>
<dbReference type="Pfam" id="PF15424">
    <property type="entry name" value="ODAM"/>
    <property type="match status" value="1"/>
</dbReference>
<protein>
    <recommendedName>
        <fullName>Odontogenic ameloblast-associated protein</fullName>
    </recommendedName>
    <alternativeName>
        <fullName>Apin</fullName>
    </alternativeName>
</protein>
<sequence>MRTLILLGILGATMSAPLIPQHLMSASNSNELLLNLNNAQLRPLQLQGPFNSWFPPFPGILQQQQQNQVPGLSPFSLSTREWFAGLVPNQIFVPGQVSFAQGTQAGQLDPSQPQTPQQTQRGPKNVMPSVFFKMPQEQAQMLQYYPVYMFLPWEQPQQTVAQSPPQTREQLFEKQMPFYTEFGYIPQQVEPVMPVEQQQPVFDPFLGTAPEIAAMPAEVSPYLQKEMINFQHTNAGIFIPSTSQKPSTTIFFTSAVDPIITRELTEKKAKTDSLKEP</sequence>